<name>PYRB_STRMK</name>
<dbReference type="EC" id="2.1.3.2" evidence="1"/>
<dbReference type="EMBL" id="AM743169">
    <property type="protein sequence ID" value="CAQ44658.1"/>
    <property type="molecule type" value="Genomic_DNA"/>
</dbReference>
<dbReference type="RefSeq" id="WP_005412492.1">
    <property type="nucleotide sequence ID" value="NC_010943.1"/>
</dbReference>
<dbReference type="SMR" id="B2FRV3"/>
<dbReference type="EnsemblBacteria" id="CAQ44658">
    <property type="protein sequence ID" value="CAQ44658"/>
    <property type="gene ID" value="Smlt1100"/>
</dbReference>
<dbReference type="KEGG" id="sml:Smlt1100"/>
<dbReference type="eggNOG" id="COG0540">
    <property type="taxonomic scope" value="Bacteria"/>
</dbReference>
<dbReference type="HOGENOM" id="CLU_043846_2_0_6"/>
<dbReference type="UniPathway" id="UPA00070">
    <property type="reaction ID" value="UER00116"/>
</dbReference>
<dbReference type="Proteomes" id="UP000008840">
    <property type="component" value="Chromosome"/>
</dbReference>
<dbReference type="GO" id="GO:0005829">
    <property type="term" value="C:cytosol"/>
    <property type="evidence" value="ECO:0007669"/>
    <property type="project" value="TreeGrafter"/>
</dbReference>
<dbReference type="GO" id="GO:0016597">
    <property type="term" value="F:amino acid binding"/>
    <property type="evidence" value="ECO:0007669"/>
    <property type="project" value="InterPro"/>
</dbReference>
<dbReference type="GO" id="GO:0004070">
    <property type="term" value="F:aspartate carbamoyltransferase activity"/>
    <property type="evidence" value="ECO:0007669"/>
    <property type="project" value="UniProtKB-UniRule"/>
</dbReference>
<dbReference type="GO" id="GO:0006207">
    <property type="term" value="P:'de novo' pyrimidine nucleobase biosynthetic process"/>
    <property type="evidence" value="ECO:0007669"/>
    <property type="project" value="InterPro"/>
</dbReference>
<dbReference type="GO" id="GO:0044205">
    <property type="term" value="P:'de novo' UMP biosynthetic process"/>
    <property type="evidence" value="ECO:0007669"/>
    <property type="project" value="UniProtKB-UniRule"/>
</dbReference>
<dbReference type="GO" id="GO:0006520">
    <property type="term" value="P:amino acid metabolic process"/>
    <property type="evidence" value="ECO:0007669"/>
    <property type="project" value="InterPro"/>
</dbReference>
<dbReference type="FunFam" id="3.40.50.1370:FF:000007">
    <property type="entry name" value="Aspartate carbamoyltransferase"/>
    <property type="match status" value="1"/>
</dbReference>
<dbReference type="FunFam" id="3.40.50.1370:FF:000019">
    <property type="entry name" value="Aspartate carbamoyltransferase"/>
    <property type="match status" value="1"/>
</dbReference>
<dbReference type="Gene3D" id="3.40.50.1370">
    <property type="entry name" value="Aspartate/ornithine carbamoyltransferase"/>
    <property type="match status" value="2"/>
</dbReference>
<dbReference type="HAMAP" id="MF_00001">
    <property type="entry name" value="Asp_carb_tr"/>
    <property type="match status" value="1"/>
</dbReference>
<dbReference type="InterPro" id="IPR006132">
    <property type="entry name" value="Asp/Orn_carbamoyltranf_P-bd"/>
</dbReference>
<dbReference type="InterPro" id="IPR006130">
    <property type="entry name" value="Asp/Orn_carbamoylTrfase"/>
</dbReference>
<dbReference type="InterPro" id="IPR036901">
    <property type="entry name" value="Asp/Orn_carbamoylTrfase_sf"/>
</dbReference>
<dbReference type="InterPro" id="IPR002082">
    <property type="entry name" value="Asp_carbamoyltransf"/>
</dbReference>
<dbReference type="InterPro" id="IPR006131">
    <property type="entry name" value="Asp_carbamoyltransf_Asp/Orn-bd"/>
</dbReference>
<dbReference type="NCBIfam" id="TIGR00670">
    <property type="entry name" value="asp_carb_tr"/>
    <property type="match status" value="1"/>
</dbReference>
<dbReference type="NCBIfam" id="NF002032">
    <property type="entry name" value="PRK00856.1"/>
    <property type="match status" value="1"/>
</dbReference>
<dbReference type="PANTHER" id="PTHR45753:SF6">
    <property type="entry name" value="ASPARTATE CARBAMOYLTRANSFERASE"/>
    <property type="match status" value="1"/>
</dbReference>
<dbReference type="PANTHER" id="PTHR45753">
    <property type="entry name" value="ORNITHINE CARBAMOYLTRANSFERASE, MITOCHONDRIAL"/>
    <property type="match status" value="1"/>
</dbReference>
<dbReference type="Pfam" id="PF00185">
    <property type="entry name" value="OTCace"/>
    <property type="match status" value="1"/>
</dbReference>
<dbReference type="Pfam" id="PF02729">
    <property type="entry name" value="OTCace_N"/>
    <property type="match status" value="1"/>
</dbReference>
<dbReference type="PRINTS" id="PR00100">
    <property type="entry name" value="AOTCASE"/>
</dbReference>
<dbReference type="PRINTS" id="PR00101">
    <property type="entry name" value="ATCASE"/>
</dbReference>
<dbReference type="SUPFAM" id="SSF53671">
    <property type="entry name" value="Aspartate/ornithine carbamoyltransferase"/>
    <property type="match status" value="1"/>
</dbReference>
<dbReference type="PROSITE" id="PS00097">
    <property type="entry name" value="CARBAMOYLTRANSFERASE"/>
    <property type="match status" value="1"/>
</dbReference>
<feature type="chain" id="PRO_1000088806" description="Aspartate carbamoyltransferase catalytic subunit">
    <location>
        <begin position="1"/>
        <end position="316"/>
    </location>
</feature>
<feature type="binding site" evidence="1">
    <location>
        <position position="66"/>
    </location>
    <ligand>
        <name>carbamoyl phosphate</name>
        <dbReference type="ChEBI" id="CHEBI:58228"/>
    </ligand>
</feature>
<feature type="binding site" evidence="1">
    <location>
        <position position="67"/>
    </location>
    <ligand>
        <name>carbamoyl phosphate</name>
        <dbReference type="ChEBI" id="CHEBI:58228"/>
    </ligand>
</feature>
<feature type="binding site" evidence="1">
    <location>
        <position position="94"/>
    </location>
    <ligand>
        <name>L-aspartate</name>
        <dbReference type="ChEBI" id="CHEBI:29991"/>
    </ligand>
</feature>
<feature type="binding site" evidence="1">
    <location>
        <position position="116"/>
    </location>
    <ligand>
        <name>carbamoyl phosphate</name>
        <dbReference type="ChEBI" id="CHEBI:58228"/>
    </ligand>
</feature>
<feature type="binding site" evidence="1">
    <location>
        <position position="146"/>
    </location>
    <ligand>
        <name>carbamoyl phosphate</name>
        <dbReference type="ChEBI" id="CHEBI:58228"/>
    </ligand>
</feature>
<feature type="binding site" evidence="1">
    <location>
        <position position="149"/>
    </location>
    <ligand>
        <name>carbamoyl phosphate</name>
        <dbReference type="ChEBI" id="CHEBI:58228"/>
    </ligand>
</feature>
<feature type="binding site" evidence="1">
    <location>
        <position position="180"/>
    </location>
    <ligand>
        <name>L-aspartate</name>
        <dbReference type="ChEBI" id="CHEBI:29991"/>
    </ligand>
</feature>
<feature type="binding site" evidence="1">
    <location>
        <position position="235"/>
    </location>
    <ligand>
        <name>L-aspartate</name>
        <dbReference type="ChEBI" id="CHEBI:29991"/>
    </ligand>
</feature>
<feature type="binding site" evidence="1">
    <location>
        <position position="276"/>
    </location>
    <ligand>
        <name>carbamoyl phosphate</name>
        <dbReference type="ChEBI" id="CHEBI:58228"/>
    </ligand>
</feature>
<feature type="binding site" evidence="1">
    <location>
        <position position="277"/>
    </location>
    <ligand>
        <name>carbamoyl phosphate</name>
        <dbReference type="ChEBI" id="CHEBI:58228"/>
    </ligand>
</feature>
<reference key="1">
    <citation type="journal article" date="2008" name="Genome Biol.">
        <title>The complete genome, comparative and functional analysis of Stenotrophomonas maltophilia reveals an organism heavily shielded by drug resistance determinants.</title>
        <authorList>
            <person name="Crossman L.C."/>
            <person name="Gould V.C."/>
            <person name="Dow J.M."/>
            <person name="Vernikos G.S."/>
            <person name="Okazaki A."/>
            <person name="Sebaihia M."/>
            <person name="Saunders D."/>
            <person name="Arrowsmith C."/>
            <person name="Carver T."/>
            <person name="Peters N."/>
            <person name="Adlem E."/>
            <person name="Kerhornou A."/>
            <person name="Lord A."/>
            <person name="Murphy L."/>
            <person name="Seeger K."/>
            <person name="Squares R."/>
            <person name="Rutter S."/>
            <person name="Quail M.A."/>
            <person name="Rajandream M.A."/>
            <person name="Harris D."/>
            <person name="Churcher C."/>
            <person name="Bentley S.D."/>
            <person name="Parkhill J."/>
            <person name="Thomson N.R."/>
            <person name="Avison M.B."/>
        </authorList>
    </citation>
    <scope>NUCLEOTIDE SEQUENCE [LARGE SCALE GENOMIC DNA]</scope>
    <source>
        <strain>K279a</strain>
    </source>
</reference>
<protein>
    <recommendedName>
        <fullName evidence="1">Aspartate carbamoyltransferase catalytic subunit</fullName>
        <ecNumber evidence="1">2.1.3.2</ecNumber>
    </recommendedName>
    <alternativeName>
        <fullName evidence="1">Aspartate transcarbamylase</fullName>
        <shortName evidence="1">ATCase</shortName>
    </alternativeName>
</protein>
<organism>
    <name type="scientific">Stenotrophomonas maltophilia (strain K279a)</name>
    <dbReference type="NCBI Taxonomy" id="522373"/>
    <lineage>
        <taxon>Bacteria</taxon>
        <taxon>Pseudomonadati</taxon>
        <taxon>Pseudomonadota</taxon>
        <taxon>Gammaproteobacteria</taxon>
        <taxon>Lysobacterales</taxon>
        <taxon>Lysobacteraceae</taxon>
        <taxon>Stenotrophomonas</taxon>
        <taxon>Stenotrophomonas maltophilia group</taxon>
    </lineage>
</organism>
<comment type="function">
    <text evidence="1">Catalyzes the condensation of carbamoyl phosphate and aspartate to form carbamoyl aspartate and inorganic phosphate, the committed step in the de novo pyrimidine nucleotide biosynthesis pathway.</text>
</comment>
<comment type="catalytic activity">
    <reaction evidence="1">
        <text>carbamoyl phosphate + L-aspartate = N-carbamoyl-L-aspartate + phosphate + H(+)</text>
        <dbReference type="Rhea" id="RHEA:20013"/>
        <dbReference type="ChEBI" id="CHEBI:15378"/>
        <dbReference type="ChEBI" id="CHEBI:29991"/>
        <dbReference type="ChEBI" id="CHEBI:32814"/>
        <dbReference type="ChEBI" id="CHEBI:43474"/>
        <dbReference type="ChEBI" id="CHEBI:58228"/>
        <dbReference type="EC" id="2.1.3.2"/>
    </reaction>
</comment>
<comment type="pathway">
    <text evidence="1">Pyrimidine metabolism; UMP biosynthesis via de novo pathway; (S)-dihydroorotate from bicarbonate: step 2/3.</text>
</comment>
<comment type="subunit">
    <text evidence="1">Heterododecamer (2C3:3R2) of six catalytic PyrB chains organized as two trimers (C3), and six regulatory PyrI chains organized as three dimers (R2).</text>
</comment>
<comment type="similarity">
    <text evidence="1">Belongs to the aspartate/ornithine carbamoyltransferase superfamily. ATCase family.</text>
</comment>
<evidence type="ECO:0000255" key="1">
    <source>
        <dbReference type="HAMAP-Rule" id="MF_00001"/>
    </source>
</evidence>
<accession>B2FRV3</accession>
<proteinExistence type="inferred from homology"/>
<gene>
    <name evidence="1" type="primary">pyrB</name>
    <name type="ordered locus">Smlt1100</name>
</gene>
<keyword id="KW-0665">Pyrimidine biosynthesis</keyword>
<keyword id="KW-1185">Reference proteome</keyword>
<keyword id="KW-0808">Transferase</keyword>
<sequence length="316" mass="33860">MTAQQIDASGRLRHLLTLEGLPRETLLQLLDRAGQIRDAAVGRVGNKRQVLAGSAVCTLFFEPSTRTRSSFQLAAQRLGADVLNFDASTSSTRKGETACDTLRNLEAMGVRGFVVRHPDDGAVAALADAAGEGTALINAGDGRSSHPTQGLLDMLTLRQAKGPDFSKLKVVIVGDVKHSRVARTDLHALRTLGVGEIRVCGPQSLLPDDETLKGCVVGDDFDAMLEGVDALMMLRLQRERMEEGLVPSLEQYHAQYGLTNERLARAGKDAAVLHPGPINRGVEVTDEVADGPQSWVLRQVANGVAVRMAVLETLLG</sequence>